<proteinExistence type="inferred from homology"/>
<reference key="1">
    <citation type="journal article" date="2005" name="Genome Res.">
        <title>Coping with cold: the genome of the versatile marine Antarctica bacterium Pseudoalteromonas haloplanktis TAC125.</title>
        <authorList>
            <person name="Medigue C."/>
            <person name="Krin E."/>
            <person name="Pascal G."/>
            <person name="Barbe V."/>
            <person name="Bernsel A."/>
            <person name="Bertin P.N."/>
            <person name="Cheung F."/>
            <person name="Cruveiller S."/>
            <person name="D'Amico S."/>
            <person name="Duilio A."/>
            <person name="Fang G."/>
            <person name="Feller G."/>
            <person name="Ho C."/>
            <person name="Mangenot S."/>
            <person name="Marino G."/>
            <person name="Nilsson J."/>
            <person name="Parrilli E."/>
            <person name="Rocha E.P.C."/>
            <person name="Rouy Z."/>
            <person name="Sekowska A."/>
            <person name="Tutino M.L."/>
            <person name="Vallenet D."/>
            <person name="von Heijne G."/>
            <person name="Danchin A."/>
        </authorList>
    </citation>
    <scope>NUCLEOTIDE SEQUENCE [LARGE SCALE GENOMIC DNA]</scope>
    <source>
        <strain>TAC 125</strain>
    </source>
</reference>
<dbReference type="EC" id="6.1.1.1" evidence="1"/>
<dbReference type="EMBL" id="CR954246">
    <property type="protein sequence ID" value="CAI87462.1"/>
    <property type="molecule type" value="Genomic_DNA"/>
</dbReference>
<dbReference type="SMR" id="Q3II62"/>
<dbReference type="STRING" id="326442.PSHAa2413"/>
<dbReference type="KEGG" id="pha:PSHAa2413"/>
<dbReference type="PATRIC" id="fig|326442.8.peg.2326"/>
<dbReference type="eggNOG" id="COG0162">
    <property type="taxonomic scope" value="Bacteria"/>
</dbReference>
<dbReference type="HOGENOM" id="CLU_024003_0_3_6"/>
<dbReference type="BioCyc" id="PHAL326442:PSHA_RS11885-MONOMER"/>
<dbReference type="Proteomes" id="UP000006843">
    <property type="component" value="Chromosome I"/>
</dbReference>
<dbReference type="GO" id="GO:0005829">
    <property type="term" value="C:cytosol"/>
    <property type="evidence" value="ECO:0007669"/>
    <property type="project" value="TreeGrafter"/>
</dbReference>
<dbReference type="GO" id="GO:0005524">
    <property type="term" value="F:ATP binding"/>
    <property type="evidence" value="ECO:0007669"/>
    <property type="project" value="UniProtKB-UniRule"/>
</dbReference>
<dbReference type="GO" id="GO:0003723">
    <property type="term" value="F:RNA binding"/>
    <property type="evidence" value="ECO:0007669"/>
    <property type="project" value="UniProtKB-KW"/>
</dbReference>
<dbReference type="GO" id="GO:0004831">
    <property type="term" value="F:tyrosine-tRNA ligase activity"/>
    <property type="evidence" value="ECO:0007669"/>
    <property type="project" value="UniProtKB-UniRule"/>
</dbReference>
<dbReference type="GO" id="GO:0006437">
    <property type="term" value="P:tyrosyl-tRNA aminoacylation"/>
    <property type="evidence" value="ECO:0007669"/>
    <property type="project" value="UniProtKB-UniRule"/>
</dbReference>
<dbReference type="CDD" id="cd00165">
    <property type="entry name" value="S4"/>
    <property type="match status" value="1"/>
</dbReference>
<dbReference type="CDD" id="cd00805">
    <property type="entry name" value="TyrRS_core"/>
    <property type="match status" value="1"/>
</dbReference>
<dbReference type="FunFam" id="1.10.240.10:FF:000001">
    <property type="entry name" value="Tyrosine--tRNA ligase"/>
    <property type="match status" value="1"/>
</dbReference>
<dbReference type="FunFam" id="3.40.50.620:FF:000008">
    <property type="entry name" value="Tyrosine--tRNA ligase"/>
    <property type="match status" value="1"/>
</dbReference>
<dbReference type="Gene3D" id="3.40.50.620">
    <property type="entry name" value="HUPs"/>
    <property type="match status" value="1"/>
</dbReference>
<dbReference type="Gene3D" id="3.10.290.10">
    <property type="entry name" value="RNA-binding S4 domain"/>
    <property type="match status" value="1"/>
</dbReference>
<dbReference type="Gene3D" id="1.10.240.10">
    <property type="entry name" value="Tyrosyl-Transfer RNA Synthetase"/>
    <property type="match status" value="1"/>
</dbReference>
<dbReference type="HAMAP" id="MF_02006">
    <property type="entry name" value="Tyr_tRNA_synth_type1"/>
    <property type="match status" value="1"/>
</dbReference>
<dbReference type="InterPro" id="IPR001412">
    <property type="entry name" value="aa-tRNA-synth_I_CS"/>
</dbReference>
<dbReference type="InterPro" id="IPR002305">
    <property type="entry name" value="aa-tRNA-synth_Ic"/>
</dbReference>
<dbReference type="InterPro" id="IPR014729">
    <property type="entry name" value="Rossmann-like_a/b/a_fold"/>
</dbReference>
<dbReference type="InterPro" id="IPR036986">
    <property type="entry name" value="S4_RNA-bd_sf"/>
</dbReference>
<dbReference type="InterPro" id="IPR054608">
    <property type="entry name" value="SYY-like_C"/>
</dbReference>
<dbReference type="InterPro" id="IPR002307">
    <property type="entry name" value="Tyr-tRNA-ligase"/>
</dbReference>
<dbReference type="InterPro" id="IPR024088">
    <property type="entry name" value="Tyr-tRNA-ligase_bac-type"/>
</dbReference>
<dbReference type="InterPro" id="IPR024107">
    <property type="entry name" value="Tyr-tRNA-ligase_bac_1"/>
</dbReference>
<dbReference type="NCBIfam" id="TIGR00234">
    <property type="entry name" value="tyrS"/>
    <property type="match status" value="1"/>
</dbReference>
<dbReference type="PANTHER" id="PTHR11766:SF0">
    <property type="entry name" value="TYROSINE--TRNA LIGASE, MITOCHONDRIAL"/>
    <property type="match status" value="1"/>
</dbReference>
<dbReference type="PANTHER" id="PTHR11766">
    <property type="entry name" value="TYROSYL-TRNA SYNTHETASE"/>
    <property type="match status" value="1"/>
</dbReference>
<dbReference type="Pfam" id="PF22421">
    <property type="entry name" value="SYY_C-terminal"/>
    <property type="match status" value="1"/>
</dbReference>
<dbReference type="Pfam" id="PF00579">
    <property type="entry name" value="tRNA-synt_1b"/>
    <property type="match status" value="1"/>
</dbReference>
<dbReference type="PRINTS" id="PR01040">
    <property type="entry name" value="TRNASYNTHTYR"/>
</dbReference>
<dbReference type="SUPFAM" id="SSF55174">
    <property type="entry name" value="Alpha-L RNA-binding motif"/>
    <property type="match status" value="1"/>
</dbReference>
<dbReference type="SUPFAM" id="SSF52374">
    <property type="entry name" value="Nucleotidylyl transferase"/>
    <property type="match status" value="1"/>
</dbReference>
<dbReference type="PROSITE" id="PS00178">
    <property type="entry name" value="AA_TRNA_LIGASE_I"/>
    <property type="match status" value="1"/>
</dbReference>
<dbReference type="PROSITE" id="PS50889">
    <property type="entry name" value="S4"/>
    <property type="match status" value="1"/>
</dbReference>
<protein>
    <recommendedName>
        <fullName evidence="1">Tyrosine--tRNA ligase 1</fullName>
        <ecNumber evidence="1">6.1.1.1</ecNumber>
    </recommendedName>
    <alternativeName>
        <fullName evidence="1">Tyrosyl-tRNA synthetase 1</fullName>
        <shortName evidence="1">TyrRS 1</shortName>
    </alternativeName>
</protein>
<feature type="chain" id="PRO_0000234752" description="Tyrosine--tRNA ligase 1">
    <location>
        <begin position="1"/>
        <end position="420"/>
    </location>
</feature>
<feature type="domain" description="S4 RNA-binding" evidence="1">
    <location>
        <begin position="355"/>
        <end position="419"/>
    </location>
</feature>
<feature type="short sequence motif" description="'HIGH' region">
    <location>
        <begin position="40"/>
        <end position="49"/>
    </location>
</feature>
<feature type="short sequence motif" description="'KMSKS' region">
    <location>
        <begin position="232"/>
        <end position="236"/>
    </location>
</feature>
<feature type="binding site" evidence="1">
    <location>
        <position position="35"/>
    </location>
    <ligand>
        <name>L-tyrosine</name>
        <dbReference type="ChEBI" id="CHEBI:58315"/>
    </ligand>
</feature>
<feature type="binding site" evidence="1">
    <location>
        <position position="172"/>
    </location>
    <ligand>
        <name>L-tyrosine</name>
        <dbReference type="ChEBI" id="CHEBI:58315"/>
    </ligand>
</feature>
<feature type="binding site" evidence="1">
    <location>
        <position position="176"/>
    </location>
    <ligand>
        <name>L-tyrosine</name>
        <dbReference type="ChEBI" id="CHEBI:58315"/>
    </ligand>
</feature>
<feature type="binding site" evidence="1">
    <location>
        <position position="235"/>
    </location>
    <ligand>
        <name>ATP</name>
        <dbReference type="ChEBI" id="CHEBI:30616"/>
    </ligand>
</feature>
<organism>
    <name type="scientific">Pseudoalteromonas translucida (strain TAC 125)</name>
    <dbReference type="NCBI Taxonomy" id="326442"/>
    <lineage>
        <taxon>Bacteria</taxon>
        <taxon>Pseudomonadati</taxon>
        <taxon>Pseudomonadota</taxon>
        <taxon>Gammaproteobacteria</taxon>
        <taxon>Alteromonadales</taxon>
        <taxon>Pseudoalteromonadaceae</taxon>
        <taxon>Pseudoalteromonas</taxon>
    </lineage>
</organism>
<sequence length="420" mass="46895">MTTQLLEDITHRGLVSQVSDLAQLEQLLATSQVVYCGFDPTAGSLHIGHLVPLLMLKRFNDAGHKAVALIGGATGLIGDPSFKATERSLNSKETVQGWVADLSSQVESVMNPHLSEPIQLKNNADWFSGIEVLDFFRDVGKHFSINNMINRESVKQRLQRPDQGLSFTEFSYTLLQSYDFAKLNSELGCSVQIGGNDQWGNIVSGIDLTRRLNKQTVYGLTLPLITKSDGTKFGKTEGGAIWLDPKKTSPYRFYQFWLNCDDADVYNFLRFYTFLSVKEIEAIEANDITSQQKPQAQGILAEQLTRFVHGEQGLASAQRITQLLFNGQVQTLTLAELEQLEQDGLAVHAISDAKINIAELLVKSELASSKRTARELINANAIKINGEAITDEHAQLDFPLFDRFWVMQRGKKQFRLIKLA</sequence>
<accession>Q3II62</accession>
<keyword id="KW-0030">Aminoacyl-tRNA synthetase</keyword>
<keyword id="KW-0067">ATP-binding</keyword>
<keyword id="KW-0963">Cytoplasm</keyword>
<keyword id="KW-0436">Ligase</keyword>
<keyword id="KW-0547">Nucleotide-binding</keyword>
<keyword id="KW-0648">Protein biosynthesis</keyword>
<keyword id="KW-1185">Reference proteome</keyword>
<keyword id="KW-0694">RNA-binding</keyword>
<gene>
    <name evidence="1" type="primary">tyrS1</name>
    <name type="ordered locus">PSHAa2413</name>
</gene>
<comment type="function">
    <text evidence="1">Catalyzes the attachment of tyrosine to tRNA(Tyr) in a two-step reaction: tyrosine is first activated by ATP to form Tyr-AMP and then transferred to the acceptor end of tRNA(Tyr).</text>
</comment>
<comment type="catalytic activity">
    <reaction evidence="1">
        <text>tRNA(Tyr) + L-tyrosine + ATP = L-tyrosyl-tRNA(Tyr) + AMP + diphosphate + H(+)</text>
        <dbReference type="Rhea" id="RHEA:10220"/>
        <dbReference type="Rhea" id="RHEA-COMP:9706"/>
        <dbReference type="Rhea" id="RHEA-COMP:9707"/>
        <dbReference type="ChEBI" id="CHEBI:15378"/>
        <dbReference type="ChEBI" id="CHEBI:30616"/>
        <dbReference type="ChEBI" id="CHEBI:33019"/>
        <dbReference type="ChEBI" id="CHEBI:58315"/>
        <dbReference type="ChEBI" id="CHEBI:78442"/>
        <dbReference type="ChEBI" id="CHEBI:78536"/>
        <dbReference type="ChEBI" id="CHEBI:456215"/>
        <dbReference type="EC" id="6.1.1.1"/>
    </reaction>
</comment>
<comment type="subunit">
    <text evidence="1">Homodimer.</text>
</comment>
<comment type="subcellular location">
    <subcellularLocation>
        <location evidence="1">Cytoplasm</location>
    </subcellularLocation>
</comment>
<comment type="similarity">
    <text evidence="1">Belongs to the class-I aminoacyl-tRNA synthetase family. TyrS type 1 subfamily.</text>
</comment>
<name>SYY1_PSET1</name>
<evidence type="ECO:0000255" key="1">
    <source>
        <dbReference type="HAMAP-Rule" id="MF_02006"/>
    </source>
</evidence>